<dbReference type="EC" id="2.7.7.6" evidence="1"/>
<dbReference type="EMBL" id="AE016827">
    <property type="protein sequence ID" value="AAU36819.1"/>
    <property type="molecule type" value="Genomic_DNA"/>
</dbReference>
<dbReference type="RefSeq" id="WP_011199394.1">
    <property type="nucleotide sequence ID" value="NC_006300.1"/>
</dbReference>
<dbReference type="SMR" id="Q65W41"/>
<dbReference type="STRING" id="221988.MS0212"/>
<dbReference type="KEGG" id="msu:MS0212"/>
<dbReference type="eggNOG" id="COG0085">
    <property type="taxonomic scope" value="Bacteria"/>
</dbReference>
<dbReference type="HOGENOM" id="CLU_000524_4_0_6"/>
<dbReference type="OrthoDB" id="9803954at2"/>
<dbReference type="Proteomes" id="UP000000607">
    <property type="component" value="Chromosome"/>
</dbReference>
<dbReference type="GO" id="GO:0000428">
    <property type="term" value="C:DNA-directed RNA polymerase complex"/>
    <property type="evidence" value="ECO:0007669"/>
    <property type="project" value="UniProtKB-KW"/>
</dbReference>
<dbReference type="GO" id="GO:0003677">
    <property type="term" value="F:DNA binding"/>
    <property type="evidence" value="ECO:0007669"/>
    <property type="project" value="UniProtKB-UniRule"/>
</dbReference>
<dbReference type="GO" id="GO:0003899">
    <property type="term" value="F:DNA-directed RNA polymerase activity"/>
    <property type="evidence" value="ECO:0007669"/>
    <property type="project" value="UniProtKB-UniRule"/>
</dbReference>
<dbReference type="GO" id="GO:0032549">
    <property type="term" value="F:ribonucleoside binding"/>
    <property type="evidence" value="ECO:0007669"/>
    <property type="project" value="InterPro"/>
</dbReference>
<dbReference type="GO" id="GO:0006351">
    <property type="term" value="P:DNA-templated transcription"/>
    <property type="evidence" value="ECO:0007669"/>
    <property type="project" value="UniProtKB-UniRule"/>
</dbReference>
<dbReference type="CDD" id="cd00653">
    <property type="entry name" value="RNA_pol_B_RPB2"/>
    <property type="match status" value="1"/>
</dbReference>
<dbReference type="FunFam" id="2.40.270.10:FF:000004">
    <property type="entry name" value="DNA-directed RNA polymerase subunit beta"/>
    <property type="match status" value="1"/>
</dbReference>
<dbReference type="FunFam" id="2.40.50.100:FF:000006">
    <property type="entry name" value="DNA-directed RNA polymerase subunit beta"/>
    <property type="match status" value="1"/>
</dbReference>
<dbReference type="FunFam" id="2.40.50.150:FF:000001">
    <property type="entry name" value="DNA-directed RNA polymerase subunit beta"/>
    <property type="match status" value="1"/>
</dbReference>
<dbReference type="FunFam" id="3.90.1100.10:FF:000002">
    <property type="entry name" value="DNA-directed RNA polymerase subunit beta"/>
    <property type="match status" value="1"/>
</dbReference>
<dbReference type="FunFam" id="3.90.1110.10:FF:000001">
    <property type="entry name" value="DNA-directed RNA polymerase subunit beta"/>
    <property type="match status" value="1"/>
</dbReference>
<dbReference type="FunFam" id="3.90.1110.10:FF:000004">
    <property type="entry name" value="DNA-directed RNA polymerase subunit beta"/>
    <property type="match status" value="1"/>
</dbReference>
<dbReference type="FunFam" id="3.90.1800.10:FF:000001">
    <property type="entry name" value="DNA-directed RNA polymerase subunit beta"/>
    <property type="match status" value="1"/>
</dbReference>
<dbReference type="Gene3D" id="2.40.50.100">
    <property type="match status" value="1"/>
</dbReference>
<dbReference type="Gene3D" id="2.40.50.150">
    <property type="match status" value="1"/>
</dbReference>
<dbReference type="Gene3D" id="3.90.1100.10">
    <property type="match status" value="2"/>
</dbReference>
<dbReference type="Gene3D" id="2.30.150.10">
    <property type="entry name" value="DNA-directed RNA polymerase, beta subunit, external 1 domain"/>
    <property type="match status" value="1"/>
</dbReference>
<dbReference type="Gene3D" id="2.40.270.10">
    <property type="entry name" value="DNA-directed RNA polymerase, subunit 2, domain 6"/>
    <property type="match status" value="2"/>
</dbReference>
<dbReference type="Gene3D" id="3.90.1800.10">
    <property type="entry name" value="RNA polymerase alpha subunit dimerisation domain"/>
    <property type="match status" value="1"/>
</dbReference>
<dbReference type="Gene3D" id="3.90.1110.10">
    <property type="entry name" value="RNA polymerase Rpb2, domain 2"/>
    <property type="match status" value="2"/>
</dbReference>
<dbReference type="HAMAP" id="MF_01321">
    <property type="entry name" value="RNApol_bact_RpoB"/>
    <property type="match status" value="1"/>
</dbReference>
<dbReference type="InterPro" id="IPR042107">
    <property type="entry name" value="DNA-dir_RNA_pol_bsu_ext_1_sf"/>
</dbReference>
<dbReference type="InterPro" id="IPR019462">
    <property type="entry name" value="DNA-dir_RNA_pol_bsu_external_1"/>
</dbReference>
<dbReference type="InterPro" id="IPR015712">
    <property type="entry name" value="DNA-dir_RNA_pol_su2"/>
</dbReference>
<dbReference type="InterPro" id="IPR007120">
    <property type="entry name" value="DNA-dir_RNAP_su2_dom"/>
</dbReference>
<dbReference type="InterPro" id="IPR037033">
    <property type="entry name" value="DNA-dir_RNAP_su2_hyb_sf"/>
</dbReference>
<dbReference type="InterPro" id="IPR010243">
    <property type="entry name" value="RNA_pol_bsu_bac"/>
</dbReference>
<dbReference type="InterPro" id="IPR007121">
    <property type="entry name" value="RNA_pol_bsu_CS"/>
</dbReference>
<dbReference type="InterPro" id="IPR007644">
    <property type="entry name" value="RNA_pol_bsu_protrusion"/>
</dbReference>
<dbReference type="InterPro" id="IPR007642">
    <property type="entry name" value="RNA_pol_Rpb2_2"/>
</dbReference>
<dbReference type="InterPro" id="IPR037034">
    <property type="entry name" value="RNA_pol_Rpb2_2_sf"/>
</dbReference>
<dbReference type="InterPro" id="IPR007645">
    <property type="entry name" value="RNA_pol_Rpb2_3"/>
</dbReference>
<dbReference type="InterPro" id="IPR007641">
    <property type="entry name" value="RNA_pol_Rpb2_7"/>
</dbReference>
<dbReference type="InterPro" id="IPR014724">
    <property type="entry name" value="RNA_pol_RPB2_OB-fold"/>
</dbReference>
<dbReference type="NCBIfam" id="NF001616">
    <property type="entry name" value="PRK00405.1"/>
    <property type="match status" value="1"/>
</dbReference>
<dbReference type="NCBIfam" id="TIGR02013">
    <property type="entry name" value="rpoB"/>
    <property type="match status" value="1"/>
</dbReference>
<dbReference type="PANTHER" id="PTHR20856">
    <property type="entry name" value="DNA-DIRECTED RNA POLYMERASE I SUBUNIT 2"/>
    <property type="match status" value="1"/>
</dbReference>
<dbReference type="Pfam" id="PF04563">
    <property type="entry name" value="RNA_pol_Rpb2_1"/>
    <property type="match status" value="1"/>
</dbReference>
<dbReference type="Pfam" id="PF04561">
    <property type="entry name" value="RNA_pol_Rpb2_2"/>
    <property type="match status" value="2"/>
</dbReference>
<dbReference type="Pfam" id="PF04565">
    <property type="entry name" value="RNA_pol_Rpb2_3"/>
    <property type="match status" value="1"/>
</dbReference>
<dbReference type="Pfam" id="PF10385">
    <property type="entry name" value="RNA_pol_Rpb2_45"/>
    <property type="match status" value="1"/>
</dbReference>
<dbReference type="Pfam" id="PF00562">
    <property type="entry name" value="RNA_pol_Rpb2_6"/>
    <property type="match status" value="1"/>
</dbReference>
<dbReference type="Pfam" id="PF04560">
    <property type="entry name" value="RNA_pol_Rpb2_7"/>
    <property type="match status" value="1"/>
</dbReference>
<dbReference type="SUPFAM" id="SSF64484">
    <property type="entry name" value="beta and beta-prime subunits of DNA dependent RNA-polymerase"/>
    <property type="match status" value="1"/>
</dbReference>
<dbReference type="PROSITE" id="PS01166">
    <property type="entry name" value="RNA_POL_BETA"/>
    <property type="match status" value="1"/>
</dbReference>
<keyword id="KW-0240">DNA-directed RNA polymerase</keyword>
<keyword id="KW-0548">Nucleotidyltransferase</keyword>
<keyword id="KW-0804">Transcription</keyword>
<keyword id="KW-0808">Transferase</keyword>
<organism>
    <name type="scientific">Mannheimia succiniciproducens (strain KCTC 0769BP / MBEL55E)</name>
    <dbReference type="NCBI Taxonomy" id="221988"/>
    <lineage>
        <taxon>Bacteria</taxon>
        <taxon>Pseudomonadati</taxon>
        <taxon>Pseudomonadota</taxon>
        <taxon>Gammaproteobacteria</taxon>
        <taxon>Pasteurellales</taxon>
        <taxon>Pasteurellaceae</taxon>
        <taxon>Basfia</taxon>
    </lineage>
</organism>
<comment type="function">
    <text evidence="1">DNA-dependent RNA polymerase catalyzes the transcription of DNA into RNA using the four ribonucleoside triphosphates as substrates.</text>
</comment>
<comment type="catalytic activity">
    <reaction evidence="1">
        <text>RNA(n) + a ribonucleoside 5'-triphosphate = RNA(n+1) + diphosphate</text>
        <dbReference type="Rhea" id="RHEA:21248"/>
        <dbReference type="Rhea" id="RHEA-COMP:14527"/>
        <dbReference type="Rhea" id="RHEA-COMP:17342"/>
        <dbReference type="ChEBI" id="CHEBI:33019"/>
        <dbReference type="ChEBI" id="CHEBI:61557"/>
        <dbReference type="ChEBI" id="CHEBI:140395"/>
        <dbReference type="EC" id="2.7.7.6"/>
    </reaction>
</comment>
<comment type="subunit">
    <text evidence="1">The RNAP catalytic core consists of 2 alpha, 1 beta, 1 beta' and 1 omega subunit. When a sigma factor is associated with the core the holoenzyme is formed, which can initiate transcription.</text>
</comment>
<comment type="similarity">
    <text evidence="1">Belongs to the RNA polymerase beta chain family.</text>
</comment>
<gene>
    <name evidence="1" type="primary">rpoB</name>
    <name type="ordered locus">MS0212</name>
</gene>
<evidence type="ECO:0000255" key="1">
    <source>
        <dbReference type="HAMAP-Rule" id="MF_01321"/>
    </source>
</evidence>
<accession>Q65W41</accession>
<reference key="1">
    <citation type="journal article" date="2004" name="Nat. Biotechnol.">
        <title>The genome sequence of the capnophilic rumen bacterium Mannheimia succiniciproducens.</title>
        <authorList>
            <person name="Hong S.H."/>
            <person name="Kim J.S."/>
            <person name="Lee S.Y."/>
            <person name="In Y.H."/>
            <person name="Choi S.S."/>
            <person name="Rih J.-K."/>
            <person name="Kim C.H."/>
            <person name="Jeong H."/>
            <person name="Hur C.G."/>
            <person name="Kim J.J."/>
        </authorList>
    </citation>
    <scope>NUCLEOTIDE SEQUENCE [LARGE SCALE GENOMIC DNA]</scope>
    <source>
        <strain>KCTC 0769BP / MBEL55E</strain>
    </source>
</reference>
<protein>
    <recommendedName>
        <fullName evidence="1">DNA-directed RNA polymerase subunit beta</fullName>
        <shortName evidence="1">RNAP subunit beta</shortName>
        <ecNumber evidence="1">2.7.7.6</ecNumber>
    </recommendedName>
    <alternativeName>
        <fullName evidence="1">RNA polymerase subunit beta</fullName>
    </alternativeName>
    <alternativeName>
        <fullName evidence="1">Transcriptase subunit beta</fullName>
    </alternativeName>
</protein>
<proteinExistence type="inferred from homology"/>
<sequence length="1342" mass="149638">MGYSYTEKKRIRKDFGKRPQVLNVPYLLTIQLDSFEKFIQRDPEGQQGLEAAFRSVFPIVSNNGSTELQYVSYKLGEPVFDVRECQIRGTTFAAPLRVNLRLVSYDRDAAPGTIKDIKEQDVYMGEIPLMTDNGTFVINGTERVIVSQLHRSPGVFFDSDKGKTHSSGKVLYNARIIPYRGSWLDFEFDPKDNLFARIDRRRKLPATIILRALGYSTEEILDLFFEKIQFEIQDNKLLMALVPERLRGETASFDIEANGKVYVERGRRITARHIRTLEKDNVTKIDVPTEYIVGKVSAKDYIDLESGELVCPANMEISLDILAKLAQAGYKSIETLFTNDLDFGPYISETLRVDPSSDRLSALVEIYRMMRPGEPPTKEAAEALFDNLFFSAERYDLSAVGRMKFNRSLGLAEGVGNGVLSKEDIVGVMKKLIDIRNGRGEVDDIDHLGNRRIRSVGEMAENQFRIGLVRVERAVKERLSLGDLDAVTPQDLINAKPVSAAVKEFFGSSQLSQFMDQNNPLSEVTHKRRISALGPGGLTRERAGFEVRDVHPTHYGRVCPIETPEGPNIGLINSLSVYARTNNYGFLETPYRKVVDGQVTEEIEYLSAIEEGNYVIAQANASLDEDFRFTDAFVTCRGEHGESGLYRPEEIQYMDVSPQQVVSVAAALIPFLEHDDANRALMGANMQRQAVPTLRADKPLVGTGMEKPIALDSGVAVVAKRGGIIQYVDASRIVVKVNEDETIPGEAGIDIYNLIKYTRSNQNTCINQIPCVNLGEPIGRGEVLADGPSTDLGELALGQNIRVAFMPWNGYNFEDSMLVSERVVQQDRFTTIHIQELSCVARDTKLGAEEITADIPNVGETALSKLDESGIVYVGAEVKGGDILVGKVTPKGETQLTPEEKLLRAIFGEKASDVKDSSLRVPNSVSGTVIDVQVFTRDGVEKDKRALEIEEMQLKEAKKDIAEELEILEAGLFSRVRNLLIDGGVDAKELDRLDRTKWLEQTLNDEAKQNQLEQLAEQYEELRKDFEHKLEVKRGKIIQGDDLAPGVLKVVKVYLAVKRRIQPGDKMAGRHGNKGVISKINPVEDMPYDENGQPVEIVLNPLGVPSRMNIGQILETHLGLAAKGIGEQINRMLKEKQEIEKLRGYIQKAYDLGGGSQKVDLNTFTDEEVMRLAQNLRKGMPLATPVFDGAEEKEIKDLLELGGLPTSGQITLYDGRTGEKFERPVTVGYMYMLKLNHLVDDKMHARSTGSYSLVTQQPLGGKAQFGGQRFGEMEVWALEAYGAAYTLQEMLTVKSDDVNGRTKMYKNIVSGTHQMDPGTPESFNVIMKEIRSLGINIDLDEE</sequence>
<feature type="chain" id="PRO_0000224071" description="DNA-directed RNA polymerase subunit beta">
    <location>
        <begin position="1"/>
        <end position="1342"/>
    </location>
</feature>
<name>RPOB_MANSM</name>